<organism>
    <name type="scientific">Acidobacterium capsulatum (strain ATCC 51196 / DSM 11244 / BCRC 80197 / JCM 7670 / NBRC 15755 / NCIMB 13165 / 161)</name>
    <dbReference type="NCBI Taxonomy" id="240015"/>
    <lineage>
        <taxon>Bacteria</taxon>
        <taxon>Pseudomonadati</taxon>
        <taxon>Acidobacteriota</taxon>
        <taxon>Terriglobia</taxon>
        <taxon>Terriglobales</taxon>
        <taxon>Acidobacteriaceae</taxon>
        <taxon>Acidobacterium</taxon>
    </lineage>
</organism>
<feature type="chain" id="PRO_1000116556" description="Ribosome maturation factor RimM">
    <location>
        <begin position="1"/>
        <end position="213"/>
    </location>
</feature>
<feature type="domain" description="PRC barrel" evidence="1">
    <location>
        <begin position="99"/>
        <end position="175"/>
    </location>
</feature>
<feature type="region of interest" description="Disordered" evidence="2">
    <location>
        <begin position="182"/>
        <end position="213"/>
    </location>
</feature>
<feature type="compositionally biased region" description="Basic residues" evidence="2">
    <location>
        <begin position="189"/>
        <end position="199"/>
    </location>
</feature>
<proteinExistence type="inferred from homology"/>
<name>RIMM_ACIC5</name>
<dbReference type="EMBL" id="CP001472">
    <property type="protein sequence ID" value="ACO31518.1"/>
    <property type="molecule type" value="Genomic_DNA"/>
</dbReference>
<dbReference type="RefSeq" id="WP_015897866.1">
    <property type="nucleotide sequence ID" value="NC_012483.1"/>
</dbReference>
<dbReference type="SMR" id="C1F3B3"/>
<dbReference type="FunCoup" id="C1F3B3">
    <property type="interactions" value="398"/>
</dbReference>
<dbReference type="STRING" id="240015.ACP_2807"/>
<dbReference type="KEGG" id="aca:ACP_2807"/>
<dbReference type="eggNOG" id="COG0806">
    <property type="taxonomic scope" value="Bacteria"/>
</dbReference>
<dbReference type="HOGENOM" id="CLU_077636_3_0_0"/>
<dbReference type="InParanoid" id="C1F3B3"/>
<dbReference type="OrthoDB" id="9810331at2"/>
<dbReference type="Proteomes" id="UP000002207">
    <property type="component" value="Chromosome"/>
</dbReference>
<dbReference type="GO" id="GO:0005737">
    <property type="term" value="C:cytoplasm"/>
    <property type="evidence" value="ECO:0007669"/>
    <property type="project" value="UniProtKB-SubCell"/>
</dbReference>
<dbReference type="GO" id="GO:0005840">
    <property type="term" value="C:ribosome"/>
    <property type="evidence" value="ECO:0007669"/>
    <property type="project" value="InterPro"/>
</dbReference>
<dbReference type="GO" id="GO:0043022">
    <property type="term" value="F:ribosome binding"/>
    <property type="evidence" value="ECO:0007669"/>
    <property type="project" value="InterPro"/>
</dbReference>
<dbReference type="GO" id="GO:0042274">
    <property type="term" value="P:ribosomal small subunit biogenesis"/>
    <property type="evidence" value="ECO:0007669"/>
    <property type="project" value="UniProtKB-UniRule"/>
</dbReference>
<dbReference type="GO" id="GO:0006364">
    <property type="term" value="P:rRNA processing"/>
    <property type="evidence" value="ECO:0007669"/>
    <property type="project" value="UniProtKB-UniRule"/>
</dbReference>
<dbReference type="Gene3D" id="2.30.30.240">
    <property type="entry name" value="PRC-barrel domain"/>
    <property type="match status" value="1"/>
</dbReference>
<dbReference type="Gene3D" id="2.40.30.60">
    <property type="entry name" value="RimM"/>
    <property type="match status" value="1"/>
</dbReference>
<dbReference type="HAMAP" id="MF_00014">
    <property type="entry name" value="Ribosome_mat_RimM"/>
    <property type="match status" value="1"/>
</dbReference>
<dbReference type="InterPro" id="IPR011033">
    <property type="entry name" value="PRC_barrel-like_sf"/>
</dbReference>
<dbReference type="InterPro" id="IPR056792">
    <property type="entry name" value="PRC_RimM"/>
</dbReference>
<dbReference type="InterPro" id="IPR011961">
    <property type="entry name" value="RimM"/>
</dbReference>
<dbReference type="InterPro" id="IPR002676">
    <property type="entry name" value="RimM_N"/>
</dbReference>
<dbReference type="InterPro" id="IPR036976">
    <property type="entry name" value="RimM_N_sf"/>
</dbReference>
<dbReference type="InterPro" id="IPR009000">
    <property type="entry name" value="Transl_B-barrel_sf"/>
</dbReference>
<dbReference type="NCBIfam" id="TIGR02273">
    <property type="entry name" value="16S_RimM"/>
    <property type="match status" value="1"/>
</dbReference>
<dbReference type="PANTHER" id="PTHR33692">
    <property type="entry name" value="RIBOSOME MATURATION FACTOR RIMM"/>
    <property type="match status" value="1"/>
</dbReference>
<dbReference type="PANTHER" id="PTHR33692:SF1">
    <property type="entry name" value="RIBOSOME MATURATION FACTOR RIMM"/>
    <property type="match status" value="1"/>
</dbReference>
<dbReference type="Pfam" id="PF24986">
    <property type="entry name" value="PRC_RimM"/>
    <property type="match status" value="1"/>
</dbReference>
<dbReference type="Pfam" id="PF01782">
    <property type="entry name" value="RimM"/>
    <property type="match status" value="1"/>
</dbReference>
<dbReference type="SUPFAM" id="SSF50346">
    <property type="entry name" value="PRC-barrel domain"/>
    <property type="match status" value="1"/>
</dbReference>
<dbReference type="SUPFAM" id="SSF50447">
    <property type="entry name" value="Translation proteins"/>
    <property type="match status" value="1"/>
</dbReference>
<evidence type="ECO:0000255" key="1">
    <source>
        <dbReference type="HAMAP-Rule" id="MF_00014"/>
    </source>
</evidence>
<evidence type="ECO:0000256" key="2">
    <source>
        <dbReference type="SAM" id="MobiDB-lite"/>
    </source>
</evidence>
<sequence length="213" mass="23572">MPTSPWVTLAHIVRPQGRRGEVIAELLTDFPEKFAERRHVFLTRDAASDAAPREMELAGYRLAQNRVVLHFAGIDSIDAAEMLRGLDVVIPESERAPLDQDAAYISDLIGCDVWDEAAGQRVGIVQDVDRQASHVDLLVVDCENGQRAEIPFVKAFLVKLDTTGKRITMRLPEGLLEINASTATAREPRARRTRKRGLRKPITGADATPPDSQ</sequence>
<gene>
    <name evidence="1" type="primary">rimM</name>
    <name type="ordered locus">ACP_2807</name>
</gene>
<accession>C1F3B3</accession>
<reference key="1">
    <citation type="journal article" date="2009" name="Appl. Environ. Microbiol.">
        <title>Three genomes from the phylum Acidobacteria provide insight into the lifestyles of these microorganisms in soils.</title>
        <authorList>
            <person name="Ward N.L."/>
            <person name="Challacombe J.F."/>
            <person name="Janssen P.H."/>
            <person name="Henrissat B."/>
            <person name="Coutinho P.M."/>
            <person name="Wu M."/>
            <person name="Xie G."/>
            <person name="Haft D.H."/>
            <person name="Sait M."/>
            <person name="Badger J."/>
            <person name="Barabote R.D."/>
            <person name="Bradley B."/>
            <person name="Brettin T.S."/>
            <person name="Brinkac L.M."/>
            <person name="Bruce D."/>
            <person name="Creasy T."/>
            <person name="Daugherty S.C."/>
            <person name="Davidsen T.M."/>
            <person name="DeBoy R.T."/>
            <person name="Detter J.C."/>
            <person name="Dodson R.J."/>
            <person name="Durkin A.S."/>
            <person name="Ganapathy A."/>
            <person name="Gwinn-Giglio M."/>
            <person name="Han C.S."/>
            <person name="Khouri H."/>
            <person name="Kiss H."/>
            <person name="Kothari S.P."/>
            <person name="Madupu R."/>
            <person name="Nelson K.E."/>
            <person name="Nelson W.C."/>
            <person name="Paulsen I."/>
            <person name="Penn K."/>
            <person name="Ren Q."/>
            <person name="Rosovitz M.J."/>
            <person name="Selengut J.D."/>
            <person name="Shrivastava S."/>
            <person name="Sullivan S.A."/>
            <person name="Tapia R."/>
            <person name="Thompson L.S."/>
            <person name="Watkins K.L."/>
            <person name="Yang Q."/>
            <person name="Yu C."/>
            <person name="Zafar N."/>
            <person name="Zhou L."/>
            <person name="Kuske C.R."/>
        </authorList>
    </citation>
    <scope>NUCLEOTIDE SEQUENCE [LARGE SCALE GENOMIC DNA]</scope>
    <source>
        <strain>ATCC 51196 / DSM 11244 / BCRC 80197 / JCM 7670 / NBRC 15755 / NCIMB 13165 / 161</strain>
    </source>
</reference>
<keyword id="KW-0143">Chaperone</keyword>
<keyword id="KW-0963">Cytoplasm</keyword>
<keyword id="KW-1185">Reference proteome</keyword>
<keyword id="KW-0690">Ribosome biogenesis</keyword>
<keyword id="KW-0698">rRNA processing</keyword>
<protein>
    <recommendedName>
        <fullName evidence="1">Ribosome maturation factor RimM</fullName>
    </recommendedName>
</protein>
<comment type="function">
    <text evidence="1">An accessory protein needed during the final step in the assembly of 30S ribosomal subunit, possibly for assembly of the head region. Essential for efficient processing of 16S rRNA. May be needed both before and after RbfA during the maturation of 16S rRNA. It has affinity for free ribosomal 30S subunits but not for 70S ribosomes.</text>
</comment>
<comment type="subunit">
    <text evidence="1">Binds ribosomal protein uS19.</text>
</comment>
<comment type="subcellular location">
    <subcellularLocation>
        <location evidence="1">Cytoplasm</location>
    </subcellularLocation>
</comment>
<comment type="domain">
    <text evidence="1">The PRC barrel domain binds ribosomal protein uS19.</text>
</comment>
<comment type="similarity">
    <text evidence="1">Belongs to the RimM family.</text>
</comment>